<evidence type="ECO:0000255" key="1">
    <source>
        <dbReference type="HAMAP-Rule" id="MF_00549"/>
    </source>
</evidence>
<organism>
    <name type="scientific">Yersinia pseudotuberculosis serotype I (strain IP32953)</name>
    <dbReference type="NCBI Taxonomy" id="273123"/>
    <lineage>
        <taxon>Bacteria</taxon>
        <taxon>Pseudomonadati</taxon>
        <taxon>Pseudomonadota</taxon>
        <taxon>Gammaproteobacteria</taxon>
        <taxon>Enterobacterales</taxon>
        <taxon>Yersiniaceae</taxon>
        <taxon>Yersinia</taxon>
    </lineage>
</organism>
<name>MGSA_YERPS</name>
<dbReference type="EC" id="4.2.3.3" evidence="1"/>
<dbReference type="EMBL" id="BX936398">
    <property type="protein sequence ID" value="CAH20699.1"/>
    <property type="molecule type" value="Genomic_DNA"/>
</dbReference>
<dbReference type="RefSeq" id="WP_002213060.1">
    <property type="nucleotide sequence ID" value="NZ_CP009712.1"/>
</dbReference>
<dbReference type="SMR" id="Q66CE4"/>
<dbReference type="KEGG" id="ypo:BZ17_1059"/>
<dbReference type="KEGG" id="yps:YPTB1459"/>
<dbReference type="PATRIC" id="fig|273123.14.peg.1124"/>
<dbReference type="Proteomes" id="UP000001011">
    <property type="component" value="Chromosome"/>
</dbReference>
<dbReference type="GO" id="GO:0005829">
    <property type="term" value="C:cytosol"/>
    <property type="evidence" value="ECO:0007669"/>
    <property type="project" value="TreeGrafter"/>
</dbReference>
<dbReference type="GO" id="GO:0008929">
    <property type="term" value="F:methylglyoxal synthase activity"/>
    <property type="evidence" value="ECO:0007669"/>
    <property type="project" value="UniProtKB-UniRule"/>
</dbReference>
<dbReference type="GO" id="GO:0019242">
    <property type="term" value="P:methylglyoxal biosynthetic process"/>
    <property type="evidence" value="ECO:0007669"/>
    <property type="project" value="UniProtKB-UniRule"/>
</dbReference>
<dbReference type="CDD" id="cd01422">
    <property type="entry name" value="MGS"/>
    <property type="match status" value="1"/>
</dbReference>
<dbReference type="FunFam" id="3.40.50.1380:FF:000002">
    <property type="entry name" value="Methylglyoxal synthase"/>
    <property type="match status" value="1"/>
</dbReference>
<dbReference type="Gene3D" id="3.40.50.1380">
    <property type="entry name" value="Methylglyoxal synthase-like domain"/>
    <property type="match status" value="1"/>
</dbReference>
<dbReference type="HAMAP" id="MF_00549">
    <property type="entry name" value="Methylglyoxal_synth"/>
    <property type="match status" value="1"/>
</dbReference>
<dbReference type="InterPro" id="IPR004363">
    <property type="entry name" value="Methylgl_synth"/>
</dbReference>
<dbReference type="InterPro" id="IPR018148">
    <property type="entry name" value="Methylglyoxal_synth_AS"/>
</dbReference>
<dbReference type="InterPro" id="IPR011607">
    <property type="entry name" value="MGS-like_dom"/>
</dbReference>
<dbReference type="InterPro" id="IPR036914">
    <property type="entry name" value="MGS-like_dom_sf"/>
</dbReference>
<dbReference type="NCBIfam" id="TIGR00160">
    <property type="entry name" value="MGSA"/>
    <property type="match status" value="1"/>
</dbReference>
<dbReference type="NCBIfam" id="NF003559">
    <property type="entry name" value="PRK05234.1"/>
    <property type="match status" value="1"/>
</dbReference>
<dbReference type="PANTHER" id="PTHR30492">
    <property type="entry name" value="METHYLGLYOXAL SYNTHASE"/>
    <property type="match status" value="1"/>
</dbReference>
<dbReference type="PANTHER" id="PTHR30492:SF0">
    <property type="entry name" value="METHYLGLYOXAL SYNTHASE"/>
    <property type="match status" value="1"/>
</dbReference>
<dbReference type="Pfam" id="PF02142">
    <property type="entry name" value="MGS"/>
    <property type="match status" value="1"/>
</dbReference>
<dbReference type="PIRSF" id="PIRSF006614">
    <property type="entry name" value="Methylglyox_syn"/>
    <property type="match status" value="1"/>
</dbReference>
<dbReference type="SMART" id="SM00851">
    <property type="entry name" value="MGS"/>
    <property type="match status" value="1"/>
</dbReference>
<dbReference type="SUPFAM" id="SSF52335">
    <property type="entry name" value="Methylglyoxal synthase-like"/>
    <property type="match status" value="1"/>
</dbReference>
<dbReference type="PROSITE" id="PS01335">
    <property type="entry name" value="METHYLGLYOXAL_SYNTH"/>
    <property type="match status" value="1"/>
</dbReference>
<dbReference type="PROSITE" id="PS51855">
    <property type="entry name" value="MGS"/>
    <property type="match status" value="1"/>
</dbReference>
<accession>Q66CE4</accession>
<comment type="function">
    <text evidence="1">Catalyzes the formation of methylglyoxal from dihydroxyacetone phosphate.</text>
</comment>
<comment type="catalytic activity">
    <reaction evidence="1">
        <text>dihydroxyacetone phosphate = methylglyoxal + phosphate</text>
        <dbReference type="Rhea" id="RHEA:17937"/>
        <dbReference type="ChEBI" id="CHEBI:17158"/>
        <dbReference type="ChEBI" id="CHEBI:43474"/>
        <dbReference type="ChEBI" id="CHEBI:57642"/>
        <dbReference type="EC" id="4.2.3.3"/>
    </reaction>
</comment>
<comment type="similarity">
    <text evidence="1">Belongs to the methylglyoxal synthase family.</text>
</comment>
<gene>
    <name evidence="1" type="primary">mgsA</name>
    <name type="ordered locus">YPTB1459</name>
</gene>
<protein>
    <recommendedName>
        <fullName evidence="1">Methylglyoxal synthase</fullName>
        <shortName evidence="1">MGS</shortName>
        <ecNumber evidence="1">4.2.3.3</ecNumber>
    </recommendedName>
</protein>
<reference key="1">
    <citation type="journal article" date="2004" name="Proc. Natl. Acad. Sci. U.S.A.">
        <title>Insights into the evolution of Yersinia pestis through whole-genome comparison with Yersinia pseudotuberculosis.</title>
        <authorList>
            <person name="Chain P.S.G."/>
            <person name="Carniel E."/>
            <person name="Larimer F.W."/>
            <person name="Lamerdin J."/>
            <person name="Stoutland P.O."/>
            <person name="Regala W.M."/>
            <person name="Georgescu A.M."/>
            <person name="Vergez L.M."/>
            <person name="Land M.L."/>
            <person name="Motin V.L."/>
            <person name="Brubaker R.R."/>
            <person name="Fowler J."/>
            <person name="Hinnebusch J."/>
            <person name="Marceau M."/>
            <person name="Medigue C."/>
            <person name="Simonet M."/>
            <person name="Chenal-Francisque V."/>
            <person name="Souza B."/>
            <person name="Dacheux D."/>
            <person name="Elliott J.M."/>
            <person name="Derbise A."/>
            <person name="Hauser L.J."/>
            <person name="Garcia E."/>
        </authorList>
    </citation>
    <scope>NUCLEOTIDE SEQUENCE [LARGE SCALE GENOMIC DNA]</scope>
    <source>
        <strain>IP32953</strain>
    </source>
</reference>
<feature type="chain" id="PRO_0000178657" description="Methylglyoxal synthase">
    <location>
        <begin position="1"/>
        <end position="154"/>
    </location>
</feature>
<feature type="domain" description="MGS-like" evidence="1">
    <location>
        <begin position="1"/>
        <end position="154"/>
    </location>
</feature>
<feature type="active site" description="Proton donor/acceptor" evidence="1">
    <location>
        <position position="71"/>
    </location>
</feature>
<feature type="binding site" evidence="1">
    <location>
        <position position="19"/>
    </location>
    <ligand>
        <name>substrate</name>
    </ligand>
</feature>
<feature type="binding site" evidence="1">
    <location>
        <position position="23"/>
    </location>
    <ligand>
        <name>substrate</name>
    </ligand>
</feature>
<feature type="binding site" evidence="1">
    <location>
        <begin position="45"/>
        <end position="48"/>
    </location>
    <ligand>
        <name>substrate</name>
    </ligand>
</feature>
<feature type="binding site" evidence="1">
    <location>
        <begin position="65"/>
        <end position="66"/>
    </location>
    <ligand>
        <name>substrate</name>
    </ligand>
</feature>
<feature type="binding site" evidence="1">
    <location>
        <position position="98"/>
    </location>
    <ligand>
        <name>substrate</name>
    </ligand>
</feature>
<keyword id="KW-0456">Lyase</keyword>
<sequence>MELTTRTIAARKHIALVSHDHCKKSLLAWVMENRDLLAQHELYATGTTGNLVQKATGIDVHCLLSGPMGGDQEVGALISEKKIDILIFFWDPLNAVPHDPDVKALLRLATVWNIPVATNRSTADFLIGSTLFSSEVTIAIPDYDRYMQQRLDLK</sequence>
<proteinExistence type="inferred from homology"/>